<organism>
    <name type="scientific">Mus musculus</name>
    <name type="common">Mouse</name>
    <dbReference type="NCBI Taxonomy" id="10090"/>
    <lineage>
        <taxon>Eukaryota</taxon>
        <taxon>Metazoa</taxon>
        <taxon>Chordata</taxon>
        <taxon>Craniata</taxon>
        <taxon>Vertebrata</taxon>
        <taxon>Euteleostomi</taxon>
        <taxon>Mammalia</taxon>
        <taxon>Eutheria</taxon>
        <taxon>Euarchontoglires</taxon>
        <taxon>Glires</taxon>
        <taxon>Rodentia</taxon>
        <taxon>Myomorpha</taxon>
        <taxon>Muroidea</taxon>
        <taxon>Muridae</taxon>
        <taxon>Murinae</taxon>
        <taxon>Mus</taxon>
        <taxon>Mus</taxon>
    </lineage>
</organism>
<accession>Q6P5G0</accession>
<name>MK04_MOUSE</name>
<reference key="1">
    <citation type="journal article" date="2004" name="Genome Res.">
        <title>The status, quality, and expansion of the NIH full-length cDNA project: the Mammalian Gene Collection (MGC).</title>
        <authorList>
            <consortium name="The MGC Project Team"/>
        </authorList>
    </citation>
    <scope>NUCLEOTIDE SEQUENCE [LARGE SCALE MRNA]</scope>
    <source>
        <strain>C57BL/6J</strain>
        <tissue>Brain</tissue>
    </source>
</reference>
<reference key="2">
    <citation type="journal article" date="2006" name="J. Biol. Chem.">
        <title>Characterization of the atypical MAPK ERK4 and its activation of the MAPK-activated protein kinase MK5.</title>
        <authorList>
            <person name="Kant S."/>
            <person name="Schumacher S."/>
            <person name="Singh M.K."/>
            <person name="Kispert A."/>
            <person name="Kotlyarov A."/>
            <person name="Gaestel M."/>
        </authorList>
    </citation>
    <scope>FUNCTION IN PHOSPHORYLATION OF MAPKAPK5</scope>
    <scope>SUBCELLULAR LOCATION</scope>
    <scope>INTERACTION WITH MAPKAPK5 AND MAPK6</scope>
    <scope>SUBUNIT</scope>
    <scope>MUTAGENESIS OF 49-LYS-LYS-50</scope>
</reference>
<reference key="3">
    <citation type="journal article" date="2008" name="Biochem. J.">
        <title>The Ser(186) phospho-acceptor site within ERK4 is essential for its ability to interact with and activate PRAK/MK5.</title>
        <authorList>
            <person name="Perander M."/>
            <person name="Aberg E."/>
            <person name="Johansen B."/>
            <person name="Dreyer B."/>
            <person name="Guldvik I.J."/>
            <person name="Outzen H."/>
            <person name="Keyse S.M."/>
            <person name="Seternes O.M."/>
        </authorList>
    </citation>
    <scope>INTERACTION WITH MAPKAPK5</scope>
    <scope>PHOSPHORYLATION AT SER-186</scope>
    <scope>MUTAGENESIS OF ASP-168 AND SER-186</scope>
</reference>
<reference key="4">
    <citation type="journal article" date="2008" name="J. Cell. Physiol.">
        <title>Activation loop phosphorylation of the atypical MAP kinases ERK3 and ERK4 is required for binding, activation and cytoplasmic relocalization of MK5.</title>
        <authorList>
            <person name="Deleris P."/>
            <person name="Rousseau J."/>
            <person name="Coulombe P."/>
            <person name="Rodier G."/>
            <person name="Tanguay P.L."/>
            <person name="Meloche S."/>
        </authorList>
    </citation>
    <scope>INTERACTION WITH MAPKAPK5</scope>
    <scope>PHOSPHORYLATION AT SER-186</scope>
    <scope>MUTAGENESIS OF SER-186</scope>
</reference>
<reference key="5">
    <citation type="journal article" date="2009" name="J. Biol. Chem.">
        <title>Docking of PRAK/MK5 to the atypical MAPKs ERK3 and ERK4 defines a novel MAPK interaction motif.</title>
        <authorList>
            <person name="Aberg E."/>
            <person name="Torgersen K.M."/>
            <person name="Johansen B."/>
            <person name="Keyse S.M."/>
            <person name="Perander M."/>
            <person name="Seternes O.M."/>
        </authorList>
    </citation>
    <scope>INTERACTION WITH MAPKAPK5</scope>
    <scope>DOMAIN FRIEDE MOTIF</scope>
    <scope>MUTAGENESIS OF PHE-328 AND ILE-330</scope>
</reference>
<reference key="6">
    <citation type="journal article" date="2010" name="Cell">
        <title>A tissue-specific atlas of mouse protein phosphorylation and expression.</title>
        <authorList>
            <person name="Huttlin E.L."/>
            <person name="Jedrychowski M.P."/>
            <person name="Elias J.E."/>
            <person name="Goswami T."/>
            <person name="Rad R."/>
            <person name="Beausoleil S.A."/>
            <person name="Villen J."/>
            <person name="Haas W."/>
            <person name="Sowa M.E."/>
            <person name="Gygi S.P."/>
        </authorList>
    </citation>
    <scope>PHOSPHORYLATION [LARGE SCALE ANALYSIS] AT SER-186 AND SER-430</scope>
    <scope>IDENTIFICATION BY MASS SPECTROMETRY [LARGE SCALE ANALYSIS]</scope>
    <source>
        <tissue>Brain</tissue>
        <tissue>Kidney</tissue>
    </source>
</reference>
<proteinExistence type="evidence at protein level"/>
<keyword id="KW-0067">ATP-binding</keyword>
<keyword id="KW-0131">Cell cycle</keyword>
<keyword id="KW-0963">Cytoplasm</keyword>
<keyword id="KW-0418">Kinase</keyword>
<keyword id="KW-0547">Nucleotide-binding</keyword>
<keyword id="KW-0539">Nucleus</keyword>
<keyword id="KW-0597">Phosphoprotein</keyword>
<keyword id="KW-1185">Reference proteome</keyword>
<keyword id="KW-0723">Serine/threonine-protein kinase</keyword>
<keyword id="KW-0808">Transferase</keyword>
<feature type="chain" id="PRO_0000186255" description="Mitogen-activated protein kinase 4">
    <location>
        <begin position="1"/>
        <end position="583"/>
    </location>
</feature>
<feature type="domain" description="Protein kinase" evidence="2">
    <location>
        <begin position="20"/>
        <end position="312"/>
    </location>
</feature>
<feature type="region of interest" description="Disordered" evidence="4">
    <location>
        <begin position="366"/>
        <end position="410"/>
    </location>
</feature>
<feature type="region of interest" description="Disordered" evidence="4">
    <location>
        <begin position="495"/>
        <end position="531"/>
    </location>
</feature>
<feature type="short sequence motif" description="SEG motif">
    <location>
        <begin position="186"/>
        <end position="188"/>
    </location>
</feature>
<feature type="short sequence motif" description="FRIEDE motif">
    <location>
        <begin position="328"/>
        <end position="333"/>
    </location>
</feature>
<feature type="compositionally biased region" description="Basic and acidic residues" evidence="4">
    <location>
        <begin position="366"/>
        <end position="379"/>
    </location>
</feature>
<feature type="compositionally biased region" description="Basic and acidic residues" evidence="4">
    <location>
        <begin position="391"/>
        <end position="410"/>
    </location>
</feature>
<feature type="active site" description="Proton acceptor" evidence="2 3">
    <location>
        <position position="149"/>
    </location>
</feature>
<feature type="binding site" evidence="2">
    <location>
        <begin position="26"/>
        <end position="34"/>
    </location>
    <ligand>
        <name>ATP</name>
        <dbReference type="ChEBI" id="CHEBI:30616"/>
    </ligand>
</feature>
<feature type="binding site" evidence="2">
    <location>
        <position position="49"/>
    </location>
    <ligand>
        <name>ATP</name>
        <dbReference type="ChEBI" id="CHEBI:30616"/>
    </ligand>
</feature>
<feature type="modified residue" description="Phosphoserine; by PAK1, PAK2 and PAK3" evidence="6 7 10">
    <location>
        <position position="186"/>
    </location>
</feature>
<feature type="modified residue" description="Phosphoserine" evidence="10">
    <location>
        <position position="430"/>
    </location>
</feature>
<feature type="mutagenesis site" description="ATP-binding site mutant; unable to activate MAPKAPK5." evidence="5">
    <original>KK</original>
    <variation>AA</variation>
    <location>
        <begin position="49"/>
        <end position="50"/>
    </location>
</feature>
<feature type="mutagenesis site" description="Kinase defective mutant, abolishes activity." evidence="6">
    <original>D</original>
    <variation>A</variation>
    <location>
        <position position="168"/>
    </location>
</feature>
<feature type="mutagenesis site" description="Unable to activate MAPKAPK5 promote MAPKAPK5 localization to the cytoplasm." evidence="6 7">
    <original>S</original>
    <variation>A</variation>
    <variation>D</variation>
    <location>
        <position position="186"/>
    </location>
</feature>
<feature type="mutagenesis site" description="Impairs binding to MAPKAPK5." evidence="8">
    <original>F</original>
    <variation>A</variation>
    <variation>Y</variation>
    <location>
        <position position="328"/>
    </location>
</feature>
<feature type="mutagenesis site" description="Abolishes binding to MAPKAPK5." evidence="8">
    <original>I</original>
    <variation>K</variation>
    <location>
        <position position="330"/>
    </location>
</feature>
<gene>
    <name type="primary">Mapk4</name>
    <name type="synonym">Erk4</name>
    <name type="synonym">Prkm4</name>
</gene>
<protein>
    <recommendedName>
        <fullName>Mitogen-activated protein kinase 4</fullName>
        <shortName>MAP kinase 4</shortName>
        <shortName>MAPK 4</shortName>
        <ecNumber>2.7.11.24</ecNumber>
    </recommendedName>
    <alternativeName>
        <fullName>Extracellular signal-regulated kinase 4</fullName>
        <shortName>ERK-4</shortName>
    </alternativeName>
</protein>
<dbReference type="EC" id="2.7.11.24"/>
<dbReference type="EMBL" id="BC058942">
    <property type="protein sequence ID" value="AAH58942.1"/>
    <property type="molecule type" value="mRNA"/>
</dbReference>
<dbReference type="EMBL" id="BC062911">
    <property type="protein sequence ID" value="AAH62911.1"/>
    <property type="molecule type" value="mRNA"/>
</dbReference>
<dbReference type="CCDS" id="CCDS37856.1"/>
<dbReference type="RefSeq" id="NP_766220.2">
    <property type="nucleotide sequence ID" value="NM_172632.2"/>
</dbReference>
<dbReference type="RefSeq" id="XP_006525963.1">
    <property type="nucleotide sequence ID" value="XM_006525900.4"/>
</dbReference>
<dbReference type="RefSeq" id="XP_006525964.1">
    <property type="nucleotide sequence ID" value="XM_006525901.5"/>
</dbReference>
<dbReference type="RefSeq" id="XP_030106306.1">
    <property type="nucleotide sequence ID" value="XM_030250446.2"/>
</dbReference>
<dbReference type="RefSeq" id="XP_030106307.1">
    <property type="nucleotide sequence ID" value="XM_030250447.2"/>
</dbReference>
<dbReference type="RefSeq" id="XP_036017016.1">
    <property type="nucleotide sequence ID" value="XM_036161123.1"/>
</dbReference>
<dbReference type="RefSeq" id="XP_036017017.1">
    <property type="nucleotide sequence ID" value="XM_036161124.1"/>
</dbReference>
<dbReference type="SMR" id="Q6P5G0"/>
<dbReference type="BioGRID" id="230421">
    <property type="interactions" value="1"/>
</dbReference>
<dbReference type="FunCoup" id="Q6P5G0">
    <property type="interactions" value="2120"/>
</dbReference>
<dbReference type="STRING" id="10090.ENSMUSP00000089462"/>
<dbReference type="iPTMnet" id="Q6P5G0"/>
<dbReference type="PhosphoSitePlus" id="Q6P5G0"/>
<dbReference type="SwissPalm" id="Q6P5G0"/>
<dbReference type="PaxDb" id="10090-ENSMUSP00000089462"/>
<dbReference type="ProteomicsDB" id="295569"/>
<dbReference type="Antibodypedia" id="2079">
    <property type="antibodies" value="397 antibodies from 34 providers"/>
</dbReference>
<dbReference type="DNASU" id="225724"/>
<dbReference type="Ensembl" id="ENSMUST00000091851.10">
    <property type="protein sequence ID" value="ENSMUSP00000089462.4"/>
    <property type="gene ID" value="ENSMUSG00000024558.13"/>
</dbReference>
<dbReference type="GeneID" id="225724"/>
<dbReference type="KEGG" id="mmu:225724"/>
<dbReference type="UCSC" id="uc008fpa.2">
    <property type="organism name" value="mouse"/>
</dbReference>
<dbReference type="AGR" id="MGI:2444559"/>
<dbReference type="CTD" id="5596"/>
<dbReference type="MGI" id="MGI:2444559">
    <property type="gene designation" value="Mapk4"/>
</dbReference>
<dbReference type="VEuPathDB" id="HostDB:ENSMUSG00000024558"/>
<dbReference type="eggNOG" id="KOG0660">
    <property type="taxonomic scope" value="Eukaryota"/>
</dbReference>
<dbReference type="GeneTree" id="ENSGT00940000159850"/>
<dbReference type="HOGENOM" id="CLU_000288_181_15_1"/>
<dbReference type="InParanoid" id="Q6P5G0"/>
<dbReference type="OMA" id="LSHWKRT"/>
<dbReference type="OrthoDB" id="8806754at2759"/>
<dbReference type="PhylomeDB" id="Q6P5G0"/>
<dbReference type="TreeFam" id="TF105098"/>
<dbReference type="Reactome" id="R-MMU-5687128">
    <property type="pathway name" value="MAPK6/MAPK4 signaling"/>
</dbReference>
<dbReference type="BioGRID-ORCS" id="225724">
    <property type="hits" value="4 hits in 80 CRISPR screens"/>
</dbReference>
<dbReference type="ChiTaRS" id="Mapk4">
    <property type="organism name" value="mouse"/>
</dbReference>
<dbReference type="PRO" id="PR:Q6P5G0"/>
<dbReference type="Proteomes" id="UP000000589">
    <property type="component" value="Chromosome 18"/>
</dbReference>
<dbReference type="RNAct" id="Q6P5G0">
    <property type="molecule type" value="protein"/>
</dbReference>
<dbReference type="Bgee" id="ENSMUSG00000024558">
    <property type="expression patterns" value="Expressed in caudate-putamen and 132 other cell types or tissues"/>
</dbReference>
<dbReference type="ExpressionAtlas" id="Q6P5G0">
    <property type="expression patterns" value="baseline and differential"/>
</dbReference>
<dbReference type="GO" id="GO:0005737">
    <property type="term" value="C:cytoplasm"/>
    <property type="evidence" value="ECO:0000314"/>
    <property type="project" value="UniProtKB"/>
</dbReference>
<dbReference type="GO" id="GO:0005634">
    <property type="term" value="C:nucleus"/>
    <property type="evidence" value="ECO:0000314"/>
    <property type="project" value="UniProtKB"/>
</dbReference>
<dbReference type="GO" id="GO:0005524">
    <property type="term" value="F:ATP binding"/>
    <property type="evidence" value="ECO:0007669"/>
    <property type="project" value="UniProtKB-KW"/>
</dbReference>
<dbReference type="GO" id="GO:0004707">
    <property type="term" value="F:MAP kinase activity"/>
    <property type="evidence" value="ECO:0007669"/>
    <property type="project" value="UniProtKB-EC"/>
</dbReference>
<dbReference type="GO" id="GO:0046982">
    <property type="term" value="F:protein heterodimerization activity"/>
    <property type="evidence" value="ECO:0000353"/>
    <property type="project" value="UniProtKB"/>
</dbReference>
<dbReference type="GO" id="GO:0042803">
    <property type="term" value="F:protein homodimerization activity"/>
    <property type="evidence" value="ECO:0000314"/>
    <property type="project" value="UniProtKB"/>
</dbReference>
<dbReference type="GO" id="GO:0019901">
    <property type="term" value="F:protein kinase binding"/>
    <property type="evidence" value="ECO:0000353"/>
    <property type="project" value="UniProtKB"/>
</dbReference>
<dbReference type="GO" id="GO:0106310">
    <property type="term" value="F:protein serine kinase activity"/>
    <property type="evidence" value="ECO:0007669"/>
    <property type="project" value="RHEA"/>
</dbReference>
<dbReference type="CDD" id="cd07854">
    <property type="entry name" value="STKc_MAPK4_6"/>
    <property type="match status" value="1"/>
</dbReference>
<dbReference type="FunFam" id="3.30.200.20:FF:000281">
    <property type="entry name" value="Mitogen-activated protein kinase 4"/>
    <property type="match status" value="1"/>
</dbReference>
<dbReference type="FunFam" id="1.10.510.10:FF:000136">
    <property type="entry name" value="mitogen-activated protein kinase 6"/>
    <property type="match status" value="1"/>
</dbReference>
<dbReference type="Gene3D" id="3.30.200.20">
    <property type="entry name" value="Phosphorylase Kinase, domain 1"/>
    <property type="match status" value="1"/>
</dbReference>
<dbReference type="Gene3D" id="1.10.510.10">
    <property type="entry name" value="Transferase(Phosphotransferase) domain 1"/>
    <property type="match status" value="1"/>
</dbReference>
<dbReference type="InterPro" id="IPR011009">
    <property type="entry name" value="Kinase-like_dom_sf"/>
</dbReference>
<dbReference type="InterPro" id="IPR050117">
    <property type="entry name" value="MAP_kinase"/>
</dbReference>
<dbReference type="InterPro" id="IPR008350">
    <property type="entry name" value="MAPK_ERK3/4"/>
</dbReference>
<dbReference type="InterPro" id="IPR000719">
    <property type="entry name" value="Prot_kinase_dom"/>
</dbReference>
<dbReference type="InterPro" id="IPR017441">
    <property type="entry name" value="Protein_kinase_ATP_BS"/>
</dbReference>
<dbReference type="InterPro" id="IPR008271">
    <property type="entry name" value="Ser/Thr_kinase_AS"/>
</dbReference>
<dbReference type="PANTHER" id="PTHR24055">
    <property type="entry name" value="MITOGEN-ACTIVATED PROTEIN KINASE"/>
    <property type="match status" value="1"/>
</dbReference>
<dbReference type="Pfam" id="PF00069">
    <property type="entry name" value="Pkinase"/>
    <property type="match status" value="1"/>
</dbReference>
<dbReference type="PRINTS" id="PR01771">
    <property type="entry name" value="ERK3ERK4MAPK"/>
</dbReference>
<dbReference type="SMART" id="SM00220">
    <property type="entry name" value="S_TKc"/>
    <property type="match status" value="1"/>
</dbReference>
<dbReference type="SUPFAM" id="SSF56112">
    <property type="entry name" value="Protein kinase-like (PK-like)"/>
    <property type="match status" value="1"/>
</dbReference>
<dbReference type="PROSITE" id="PS00107">
    <property type="entry name" value="PROTEIN_KINASE_ATP"/>
    <property type="match status" value="1"/>
</dbReference>
<dbReference type="PROSITE" id="PS50011">
    <property type="entry name" value="PROTEIN_KINASE_DOM"/>
    <property type="match status" value="1"/>
</dbReference>
<dbReference type="PROSITE" id="PS00108">
    <property type="entry name" value="PROTEIN_KINASE_ST"/>
    <property type="match status" value="1"/>
</dbReference>
<evidence type="ECO:0000250" key="1"/>
<evidence type="ECO:0000255" key="2">
    <source>
        <dbReference type="PROSITE-ProRule" id="PRU00159"/>
    </source>
</evidence>
<evidence type="ECO:0000255" key="3">
    <source>
        <dbReference type="PROSITE-ProRule" id="PRU10027"/>
    </source>
</evidence>
<evidence type="ECO:0000256" key="4">
    <source>
        <dbReference type="SAM" id="MobiDB-lite"/>
    </source>
</evidence>
<evidence type="ECO:0000269" key="5">
    <source>
    </source>
</evidence>
<evidence type="ECO:0000269" key="6">
    <source>
    </source>
</evidence>
<evidence type="ECO:0000269" key="7">
    <source>
    </source>
</evidence>
<evidence type="ECO:0000269" key="8">
    <source>
    </source>
</evidence>
<evidence type="ECO:0000305" key="9"/>
<evidence type="ECO:0007744" key="10">
    <source>
    </source>
</evidence>
<sequence>MAEKGDCIASVYGYDLGGRFIDFQPLGFGVNGLVLSATDSRACRKVAVKKIVLSDARSMKHALREIKIIRRLDHDNIVKVYEVLGPKGSDLQGELFKFSVAYIVQEYMETDLACLLEQGTLTEDHAKLFMYQLLRGLKYIHSANVLHRDLKPANIFISTEDLVLKIGDFGLARIVDQHYSHKGYLSEGLVTKWYRSPRLLLSPNNYTKAIDMWAAGCILAEMLTGKMLFAGAHELEQMQLILDTIPVVREEDKEELLRVMPSFVSSTWEVKRPLRKLLPDVNSEAIDFLEKILTFNPMDRLTAEMGLQHPYMSPYSCPEDEPTSQHPFRIEDEIDDIVLMAASQSQLSNWDRYPVSLSSDLEWRPDRCQDASEVQRDPRAGSTPLAEDVQVDPRKDSQSSSERFLEQSHSSMERAFEADYGRSCDYKVGSPSYLDKLLWRDNKPHHYSEPKLILDLSHWKQAASAPPRAAVAADPVSREDEPASLFLEIAQWVKSTQSGSERASPPPDAPEPRLSASPPGHPTPIDGGASPQFDLDVFISRALKLCTKPEDLPENKLGDLNGACISEHPGDLVQTEAFSKERW</sequence>
<comment type="function">
    <text evidence="5">Atypical MAPK protein. Phosphorylates microtubule-associated protein 2 (MAP2) and MAPKAPK5. The precise role of the complex formed with MAPKAPK5 is still unclear, but the complex follows a complex set of phosphorylation events: upon interaction with atypical MAPKAPK5, ERK4/MAPK4 is phosphorylated at Ser-186 and then mediates phosphorylation and activation of MAPKAPK5, which in turn phosphorylates ERK4/MAPK4. May promote entry in the cell cycle.</text>
</comment>
<comment type="catalytic activity">
    <reaction>
        <text>L-seryl-[protein] + ATP = O-phospho-L-seryl-[protein] + ADP + H(+)</text>
        <dbReference type="Rhea" id="RHEA:17989"/>
        <dbReference type="Rhea" id="RHEA-COMP:9863"/>
        <dbReference type="Rhea" id="RHEA-COMP:11604"/>
        <dbReference type="ChEBI" id="CHEBI:15378"/>
        <dbReference type="ChEBI" id="CHEBI:29999"/>
        <dbReference type="ChEBI" id="CHEBI:30616"/>
        <dbReference type="ChEBI" id="CHEBI:83421"/>
        <dbReference type="ChEBI" id="CHEBI:456216"/>
        <dbReference type="EC" id="2.7.11.24"/>
    </reaction>
</comment>
<comment type="catalytic activity">
    <reaction>
        <text>L-threonyl-[protein] + ATP = O-phospho-L-threonyl-[protein] + ADP + H(+)</text>
        <dbReference type="Rhea" id="RHEA:46608"/>
        <dbReference type="Rhea" id="RHEA-COMP:11060"/>
        <dbReference type="Rhea" id="RHEA-COMP:11605"/>
        <dbReference type="ChEBI" id="CHEBI:15378"/>
        <dbReference type="ChEBI" id="CHEBI:30013"/>
        <dbReference type="ChEBI" id="CHEBI:30616"/>
        <dbReference type="ChEBI" id="CHEBI:61977"/>
        <dbReference type="ChEBI" id="CHEBI:456216"/>
        <dbReference type="EC" id="2.7.11.24"/>
    </reaction>
</comment>
<comment type="cofactor">
    <cofactor evidence="1">
        <name>Mg(2+)</name>
        <dbReference type="ChEBI" id="CHEBI:18420"/>
    </cofactor>
</comment>
<comment type="activity regulation">
    <text>Activated by phosphorylation at Ser-186.</text>
</comment>
<comment type="subunit">
    <text evidence="5 6 7 8">Homodimer. Heterodimer with ERK3/MAPK6. Interacts with (via FRIEDE motif) MAPKAPK5.</text>
</comment>
<comment type="subcellular location">
    <subcellularLocation>
        <location evidence="5">Cytoplasm</location>
    </subcellularLocation>
    <subcellularLocation>
        <location evidence="5">Nucleus</location>
    </subcellularLocation>
    <text>Translocates to the cytoplasm following interaction with MAPKAPK5.</text>
</comment>
<comment type="domain">
    <text evidence="8">The FRIEDE motif is required for docking MAPKAPK5.</text>
</comment>
<comment type="domain">
    <text evidence="8">In contrast to classical MAPKs, the TXY motif within the activation loop is replaced by the SEG motif, whose phosphorylation activates the MAP kinases.</text>
</comment>
<comment type="PTM">
    <text evidence="6 7">Phosphorylated at Ser-186 by PAK1, PAK2 and PAK3 resulting in catalytic activation. Phosphorylated by MAPKAPK5 at other sites.</text>
</comment>
<comment type="similarity">
    <text evidence="9">Belongs to the protein kinase superfamily. CMGC Ser/Thr protein kinase family. MAP kinase subfamily.</text>
</comment>